<protein>
    <recommendedName>
        <fullName evidence="1">Small ribosomal subunit protein uS11</fullName>
    </recommendedName>
    <alternativeName>
        <fullName evidence="2">30S ribosomal protein S11</fullName>
    </alternativeName>
</protein>
<gene>
    <name evidence="1" type="primary">rpsK</name>
    <name type="ordered locus">aq_073</name>
</gene>
<accession>O66485</accession>
<feature type="chain" id="PRO_0000123095" description="Small ribosomal subunit protein uS11">
    <location>
        <begin position="1"/>
        <end position="125"/>
    </location>
</feature>
<proteinExistence type="inferred from homology"/>
<reference key="1">
    <citation type="journal article" date="1998" name="Nature">
        <title>The complete genome of the hyperthermophilic bacterium Aquifex aeolicus.</title>
        <authorList>
            <person name="Deckert G."/>
            <person name="Warren P.V."/>
            <person name="Gaasterland T."/>
            <person name="Young W.G."/>
            <person name="Lenox A.L."/>
            <person name="Graham D.E."/>
            <person name="Overbeek R."/>
            <person name="Snead M.A."/>
            <person name="Keller M."/>
            <person name="Aujay M."/>
            <person name="Huber R."/>
            <person name="Feldman R.A."/>
            <person name="Short J.M."/>
            <person name="Olsen G.J."/>
            <person name="Swanson R.V."/>
        </authorList>
    </citation>
    <scope>NUCLEOTIDE SEQUENCE [LARGE SCALE GENOMIC DNA]</scope>
    <source>
        <strain>VF5</strain>
    </source>
</reference>
<dbReference type="EMBL" id="AE000657">
    <property type="protein sequence ID" value="AAC06444.1"/>
    <property type="molecule type" value="Genomic_DNA"/>
</dbReference>
<dbReference type="PIR" id="B70307">
    <property type="entry name" value="B70307"/>
</dbReference>
<dbReference type="RefSeq" id="NP_213045.1">
    <property type="nucleotide sequence ID" value="NC_000918.1"/>
</dbReference>
<dbReference type="RefSeq" id="WP_010879983.1">
    <property type="nucleotide sequence ID" value="NC_000918.1"/>
</dbReference>
<dbReference type="SMR" id="O66485"/>
<dbReference type="FunCoup" id="O66485">
    <property type="interactions" value="474"/>
</dbReference>
<dbReference type="STRING" id="224324.aq_073"/>
<dbReference type="EnsemblBacteria" id="AAC06444">
    <property type="protein sequence ID" value="AAC06444"/>
    <property type="gene ID" value="aq_073"/>
</dbReference>
<dbReference type="KEGG" id="aae:aq_073"/>
<dbReference type="PATRIC" id="fig|224324.8.peg.63"/>
<dbReference type="eggNOG" id="COG0100">
    <property type="taxonomic scope" value="Bacteria"/>
</dbReference>
<dbReference type="HOGENOM" id="CLU_072439_5_0_0"/>
<dbReference type="InParanoid" id="O66485"/>
<dbReference type="OrthoDB" id="9806415at2"/>
<dbReference type="Proteomes" id="UP000000798">
    <property type="component" value="Chromosome"/>
</dbReference>
<dbReference type="GO" id="GO:0022627">
    <property type="term" value="C:cytosolic small ribosomal subunit"/>
    <property type="evidence" value="ECO:0000318"/>
    <property type="project" value="GO_Central"/>
</dbReference>
<dbReference type="GO" id="GO:0019843">
    <property type="term" value="F:rRNA binding"/>
    <property type="evidence" value="ECO:0007669"/>
    <property type="project" value="UniProtKB-UniRule"/>
</dbReference>
<dbReference type="GO" id="GO:0003735">
    <property type="term" value="F:structural constituent of ribosome"/>
    <property type="evidence" value="ECO:0000318"/>
    <property type="project" value="GO_Central"/>
</dbReference>
<dbReference type="GO" id="GO:0006412">
    <property type="term" value="P:translation"/>
    <property type="evidence" value="ECO:0000318"/>
    <property type="project" value="GO_Central"/>
</dbReference>
<dbReference type="FunFam" id="3.30.420.80:FF:000001">
    <property type="entry name" value="30S ribosomal protein S11"/>
    <property type="match status" value="1"/>
</dbReference>
<dbReference type="Gene3D" id="3.30.420.80">
    <property type="entry name" value="Ribosomal protein S11"/>
    <property type="match status" value="1"/>
</dbReference>
<dbReference type="HAMAP" id="MF_01310">
    <property type="entry name" value="Ribosomal_uS11"/>
    <property type="match status" value="1"/>
</dbReference>
<dbReference type="InterPro" id="IPR001971">
    <property type="entry name" value="Ribosomal_uS11"/>
</dbReference>
<dbReference type="InterPro" id="IPR019981">
    <property type="entry name" value="Ribosomal_uS11_bac-type"/>
</dbReference>
<dbReference type="InterPro" id="IPR018102">
    <property type="entry name" value="Ribosomal_uS11_CS"/>
</dbReference>
<dbReference type="InterPro" id="IPR036967">
    <property type="entry name" value="Ribosomal_uS11_sf"/>
</dbReference>
<dbReference type="NCBIfam" id="NF003698">
    <property type="entry name" value="PRK05309.1"/>
    <property type="match status" value="1"/>
</dbReference>
<dbReference type="NCBIfam" id="TIGR03632">
    <property type="entry name" value="uS11_bact"/>
    <property type="match status" value="1"/>
</dbReference>
<dbReference type="PANTHER" id="PTHR11759">
    <property type="entry name" value="40S RIBOSOMAL PROTEIN S14/30S RIBOSOMAL PROTEIN S11"/>
    <property type="match status" value="1"/>
</dbReference>
<dbReference type="Pfam" id="PF00411">
    <property type="entry name" value="Ribosomal_S11"/>
    <property type="match status" value="1"/>
</dbReference>
<dbReference type="PIRSF" id="PIRSF002131">
    <property type="entry name" value="Ribosomal_S11"/>
    <property type="match status" value="1"/>
</dbReference>
<dbReference type="SUPFAM" id="SSF53137">
    <property type="entry name" value="Translational machinery components"/>
    <property type="match status" value="1"/>
</dbReference>
<dbReference type="PROSITE" id="PS00054">
    <property type="entry name" value="RIBOSOMAL_S11"/>
    <property type="match status" value="1"/>
</dbReference>
<comment type="function">
    <text evidence="1">Located on the platform of the 30S subunit, it bridges several disparate RNA helices of the 16S rRNA. Forms part of the Shine-Dalgarno cleft in the 70S ribosome.</text>
</comment>
<comment type="subunit">
    <text evidence="1">Part of the 30S ribosomal subunit. Interacts with proteins S7 and S18. Binds to IF-3.</text>
</comment>
<comment type="similarity">
    <text evidence="1">Belongs to the universal ribosomal protein uS11 family.</text>
</comment>
<sequence>MAKKKKKQKRQVTKAIVHIHTTFNNTIVNVTDTQGNTIAWASGGTVGFKGTRKSTPYAAQLAAQKAMKEAKEHGVQEVEIWVKGPGAGRESAVRAVFASGVKVTAIRDVTPIPHNGCRPPARRRV</sequence>
<organism>
    <name type="scientific">Aquifex aeolicus (strain VF5)</name>
    <dbReference type="NCBI Taxonomy" id="224324"/>
    <lineage>
        <taxon>Bacteria</taxon>
        <taxon>Pseudomonadati</taxon>
        <taxon>Aquificota</taxon>
        <taxon>Aquificia</taxon>
        <taxon>Aquificales</taxon>
        <taxon>Aquificaceae</taxon>
        <taxon>Aquifex</taxon>
    </lineage>
</organism>
<name>RS11_AQUAE</name>
<evidence type="ECO:0000255" key="1">
    <source>
        <dbReference type="HAMAP-Rule" id="MF_01310"/>
    </source>
</evidence>
<evidence type="ECO:0000305" key="2"/>
<keyword id="KW-1185">Reference proteome</keyword>
<keyword id="KW-0687">Ribonucleoprotein</keyword>
<keyword id="KW-0689">Ribosomal protein</keyword>
<keyword id="KW-0694">RNA-binding</keyword>
<keyword id="KW-0699">rRNA-binding</keyword>